<proteinExistence type="inferred from homology"/>
<name>CITH_KLEPN</name>
<evidence type="ECO:0000250" key="1">
    <source>
        <dbReference type="UniProtKB" id="P0A2G3"/>
    </source>
</evidence>
<evidence type="ECO:0000255" key="2"/>
<evidence type="ECO:0000305" key="3"/>
<comment type="function">
    <text evidence="1">Uptake of citrate across the boundary membrane with the concomitant transport of protons into the cell (symport system).</text>
</comment>
<comment type="subcellular location">
    <subcellularLocation>
        <location evidence="3">Cell inner membrane</location>
        <topology evidence="2">Multi-pass membrane protein</topology>
    </subcellularLocation>
</comment>
<comment type="miscellaneous">
    <text evidence="1">Allows the utilization of citrate as a sole source of carbon and energy.</text>
</comment>
<comment type="similarity">
    <text evidence="3">Belongs to the major facilitator superfamily. Metabolite:H+ Symporter (MHS) family (TC 2.A.1.6) family.</text>
</comment>
<reference key="1">
    <citation type="journal article" date="1990" name="Eur. J. Biochem.">
        <title>DNA sequence of a citrate carrier of Klebsiella pneumoniae.</title>
        <authorList>
            <person name="van der Rest M.E."/>
            <person name="Schwarz E."/>
            <person name="Oesterhelt D."/>
            <person name="Konings W.N."/>
        </authorList>
    </citation>
    <scope>NUCLEOTIDE SEQUENCE [GENOMIC DNA]</scope>
    <source>
        <strain>ATCC 13882 / NBRC 13541 / NCTC 8172</strain>
    </source>
</reference>
<organism>
    <name type="scientific">Klebsiella pneumoniae</name>
    <dbReference type="NCBI Taxonomy" id="573"/>
    <lineage>
        <taxon>Bacteria</taxon>
        <taxon>Pseudomonadati</taxon>
        <taxon>Pseudomonadota</taxon>
        <taxon>Gammaproteobacteria</taxon>
        <taxon>Enterobacterales</taxon>
        <taxon>Enterobacteriaceae</taxon>
        <taxon>Klebsiella/Raoultella group</taxon>
        <taxon>Klebsiella</taxon>
        <taxon>Klebsiella pneumoniae complex</taxon>
    </lineage>
</organism>
<sequence length="444" mass="48142">MPTARCSMRASSTAPVRMMATAGGARIGAILRVTSGNFLEQFDFFLFGFYATYIAHTFFPASSEFASLMMTFAVFGAGFLMRPIGAIVLGAYIDKVGRRKGLIVTLSIMATGTFLIVLIPSYQTIGLWAPLLVLIGRLLQGFSAGAELGGVSVYLAEIATPGRKGFYTSWQSGSQQVAIMVAAAMGFALNAVLEPSAISDWGWRIPFLFGVLIVPFIFILRRKLEETQEFTARRHHLAMRQVFATLLANWQVVIAGMMMVAMTTTAFYLITVYAPTFGKKVLMLSASDSLLVTLLVAISNFFWLPVGGALSDRFGRRSVLIAMTLLALATAWPALTMLANAPSFLMMLSVLLWLSFIYGMYNGAMIPALTEIMPAEVRVAGFSLAYSLATAVFGGFTPVISTALIEYTGDKASPGYWMSFAAICGLLATCYLYRRSAVALQTAR</sequence>
<feature type="chain" id="PRO_0000050301" description="Citrate-proton symporter">
    <location>
        <begin position="1"/>
        <end position="444"/>
    </location>
</feature>
<feature type="topological domain" description="Cytoplasmic" evidence="2">
    <location>
        <begin position="1"/>
        <end position="41"/>
    </location>
</feature>
<feature type="transmembrane region" description="Helical; Name=1" evidence="2">
    <location>
        <begin position="42"/>
        <end position="62"/>
    </location>
</feature>
<feature type="topological domain" description="Periplasmic" evidence="2">
    <location>
        <begin position="63"/>
        <end position="72"/>
    </location>
</feature>
<feature type="transmembrane region" description="Helical; Name=2" evidence="2">
    <location>
        <begin position="73"/>
        <end position="93"/>
    </location>
</feature>
<feature type="topological domain" description="Cytoplasmic" evidence="2">
    <location>
        <begin position="94"/>
        <end position="114"/>
    </location>
</feature>
<feature type="transmembrane region" description="Helical; Name=3" evidence="2">
    <location>
        <begin position="115"/>
        <end position="135"/>
    </location>
</feature>
<feature type="topological domain" description="Periplasmic" evidence="2">
    <location>
        <begin position="136"/>
        <end position="137"/>
    </location>
</feature>
<feature type="transmembrane region" description="Helical; Name=4" evidence="2">
    <location>
        <begin position="138"/>
        <end position="158"/>
    </location>
</feature>
<feature type="topological domain" description="Cytoplasmic" evidence="2">
    <location>
        <begin position="159"/>
        <end position="177"/>
    </location>
</feature>
<feature type="transmembrane region" description="Helical; Name=5" evidence="2">
    <location>
        <begin position="178"/>
        <end position="198"/>
    </location>
</feature>
<feature type="topological domain" description="Periplasmic" evidence="2">
    <location>
        <position position="199"/>
    </location>
</feature>
<feature type="transmembrane region" description="Helical; Name=6" evidence="2">
    <location>
        <begin position="200"/>
        <end position="220"/>
    </location>
</feature>
<feature type="topological domain" description="Cytoplasmic" evidence="2">
    <location>
        <begin position="221"/>
        <end position="251"/>
    </location>
</feature>
<feature type="transmembrane region" description="Helical; Name=7" evidence="2">
    <location>
        <begin position="252"/>
        <end position="272"/>
    </location>
</feature>
<feature type="topological domain" description="Periplasmic" evidence="2">
    <location>
        <begin position="273"/>
        <end position="289"/>
    </location>
</feature>
<feature type="transmembrane region" description="Helical; Name=8" evidence="2">
    <location>
        <begin position="290"/>
        <end position="310"/>
    </location>
</feature>
<feature type="topological domain" description="Cytoplasmic" evidence="2">
    <location>
        <begin position="311"/>
        <end position="318"/>
    </location>
</feature>
<feature type="transmembrane region" description="Helical; Name=9" evidence="2">
    <location>
        <begin position="319"/>
        <end position="339"/>
    </location>
</feature>
<feature type="topological domain" description="Periplasmic" evidence="2">
    <location>
        <position position="340"/>
    </location>
</feature>
<feature type="transmembrane region" description="Helical; Name=10" evidence="2">
    <location>
        <begin position="341"/>
        <end position="361"/>
    </location>
</feature>
<feature type="topological domain" description="Cytoplasmic" evidence="2">
    <location>
        <begin position="362"/>
        <end position="379"/>
    </location>
</feature>
<feature type="transmembrane region" description="Helical; Name=11" evidence="2">
    <location>
        <begin position="380"/>
        <end position="400"/>
    </location>
</feature>
<feature type="topological domain" description="Periplasmic" evidence="2">
    <location>
        <begin position="401"/>
        <end position="411"/>
    </location>
</feature>
<feature type="transmembrane region" description="Helical; Name=12" evidence="2">
    <location>
        <begin position="412"/>
        <end position="432"/>
    </location>
</feature>
<feature type="topological domain" description="Cytoplasmic" evidence="2">
    <location>
        <begin position="433"/>
        <end position="444"/>
    </location>
</feature>
<keyword id="KW-0997">Cell inner membrane</keyword>
<keyword id="KW-1003">Cell membrane</keyword>
<keyword id="KW-0163">Citrate utilization</keyword>
<keyword id="KW-0472">Membrane</keyword>
<keyword id="KW-0769">Symport</keyword>
<keyword id="KW-0812">Transmembrane</keyword>
<keyword id="KW-1133">Transmembrane helix</keyword>
<keyword id="KW-0813">Transport</keyword>
<dbReference type="EMBL" id="X51479">
    <property type="protein sequence ID" value="CAA35844.1"/>
    <property type="molecule type" value="Genomic_DNA"/>
</dbReference>
<dbReference type="PIR" id="S09681">
    <property type="entry name" value="S09681"/>
</dbReference>
<dbReference type="SMR" id="P16482"/>
<dbReference type="TCDB" id="2.A.1.6.1">
    <property type="family name" value="the major facilitator superfamily (mfs)"/>
</dbReference>
<dbReference type="GO" id="GO:0005886">
    <property type="term" value="C:plasma membrane"/>
    <property type="evidence" value="ECO:0007669"/>
    <property type="project" value="UniProtKB-SubCell"/>
</dbReference>
<dbReference type="GO" id="GO:0015293">
    <property type="term" value="F:symporter activity"/>
    <property type="evidence" value="ECO:0007669"/>
    <property type="project" value="UniProtKB-KW"/>
</dbReference>
<dbReference type="GO" id="GO:0006101">
    <property type="term" value="P:citrate metabolic process"/>
    <property type="evidence" value="ECO:0007669"/>
    <property type="project" value="UniProtKB-KW"/>
</dbReference>
<dbReference type="CDD" id="cd17368">
    <property type="entry name" value="MFS_CitA"/>
    <property type="match status" value="1"/>
</dbReference>
<dbReference type="FunFam" id="1.20.1250.20:FF:000001">
    <property type="entry name" value="Dicarboxylate MFS transporter"/>
    <property type="match status" value="1"/>
</dbReference>
<dbReference type="Gene3D" id="1.20.1250.20">
    <property type="entry name" value="MFS general substrate transporter like domains"/>
    <property type="match status" value="2"/>
</dbReference>
<dbReference type="InterPro" id="IPR051084">
    <property type="entry name" value="H+-coupled_symporters"/>
</dbReference>
<dbReference type="InterPro" id="IPR011701">
    <property type="entry name" value="MFS"/>
</dbReference>
<dbReference type="InterPro" id="IPR020846">
    <property type="entry name" value="MFS_dom"/>
</dbReference>
<dbReference type="InterPro" id="IPR036259">
    <property type="entry name" value="MFS_trans_sf"/>
</dbReference>
<dbReference type="InterPro" id="IPR004736">
    <property type="entry name" value="MHS_symport"/>
</dbReference>
<dbReference type="InterPro" id="IPR005829">
    <property type="entry name" value="Sugar_transporter_CS"/>
</dbReference>
<dbReference type="NCBIfam" id="TIGR00883">
    <property type="entry name" value="2A0106"/>
    <property type="match status" value="1"/>
</dbReference>
<dbReference type="NCBIfam" id="NF011656">
    <property type="entry name" value="PRK15075.1"/>
    <property type="match status" value="1"/>
</dbReference>
<dbReference type="PANTHER" id="PTHR43528">
    <property type="entry name" value="ALPHA-KETOGLUTARATE PERMEASE"/>
    <property type="match status" value="1"/>
</dbReference>
<dbReference type="PANTHER" id="PTHR43528:SF6">
    <property type="entry name" value="CITRATE-PROTON SYMPORTER"/>
    <property type="match status" value="1"/>
</dbReference>
<dbReference type="Pfam" id="PF07690">
    <property type="entry name" value="MFS_1"/>
    <property type="match status" value="1"/>
</dbReference>
<dbReference type="SUPFAM" id="SSF103473">
    <property type="entry name" value="MFS general substrate transporter"/>
    <property type="match status" value="1"/>
</dbReference>
<dbReference type="PROSITE" id="PS50850">
    <property type="entry name" value="MFS"/>
    <property type="match status" value="1"/>
</dbReference>
<dbReference type="PROSITE" id="PS00216">
    <property type="entry name" value="SUGAR_TRANSPORT_1"/>
    <property type="match status" value="2"/>
</dbReference>
<dbReference type="PROSITE" id="PS00217">
    <property type="entry name" value="SUGAR_TRANSPORT_2"/>
    <property type="match status" value="1"/>
</dbReference>
<accession>P16482</accession>
<gene>
    <name type="primary">citH</name>
    <name type="synonym">cit</name>
</gene>
<protein>
    <recommendedName>
        <fullName>Citrate-proton symporter</fullName>
    </recommendedName>
    <alternativeName>
        <fullName>Citrate carrier protein</fullName>
    </alternativeName>
    <alternativeName>
        <fullName>Citrate transporter</fullName>
    </alternativeName>
</protein>